<accession>A7I7Y6</accession>
<proteinExistence type="inferred from homology"/>
<evidence type="ECO:0000255" key="1">
    <source>
        <dbReference type="HAMAP-Rule" id="MF_01853"/>
    </source>
</evidence>
<name>PELO_METB6</name>
<keyword id="KW-0963">Cytoplasm</keyword>
<keyword id="KW-0255">Endonuclease</keyword>
<keyword id="KW-0378">Hydrolase</keyword>
<keyword id="KW-0479">Metal-binding</keyword>
<keyword id="KW-0540">Nuclease</keyword>
<keyword id="KW-1185">Reference proteome</keyword>
<reference key="1">
    <citation type="journal article" date="2015" name="Microbiology">
        <title>Genome of Methanoregula boonei 6A8 reveals adaptations to oligotrophic peatland environments.</title>
        <authorList>
            <person name="Braeuer S."/>
            <person name="Cadillo-Quiroz H."/>
            <person name="Kyrpides N."/>
            <person name="Woyke T."/>
            <person name="Goodwin L."/>
            <person name="Detter C."/>
            <person name="Podell S."/>
            <person name="Yavitt J.B."/>
            <person name="Zinder S.H."/>
        </authorList>
    </citation>
    <scope>NUCLEOTIDE SEQUENCE [LARGE SCALE GENOMIC DNA]</scope>
    <source>
        <strain>DSM 21154 / JCM 14090 / 6A8</strain>
    </source>
</reference>
<comment type="function">
    <text evidence="1">May function in recognizing stalled ribosomes, interact with stem-loop structures in stalled mRNA molecules, and effect endonucleolytic cleavage of the mRNA. May play a role in the release non-functional ribosomes and degradation of damaged mRNAs. Has endoribonuclease activity.</text>
</comment>
<comment type="cofactor">
    <cofactor evidence="1">
        <name>a divalent metal cation</name>
        <dbReference type="ChEBI" id="CHEBI:60240"/>
    </cofactor>
</comment>
<comment type="subunit">
    <text evidence="1">Monomer.</text>
</comment>
<comment type="subcellular location">
    <subcellularLocation>
        <location evidence="1">Cytoplasm</location>
    </subcellularLocation>
</comment>
<comment type="domain">
    <text evidence="1">The N-terminal domain has the RNA-binding Sm fold. It harbors the endoribonuclease activity.</text>
</comment>
<comment type="similarity">
    <text evidence="1">Belongs to the eukaryotic release factor 1 family. Pelota subfamily.</text>
</comment>
<organism>
    <name type="scientific">Methanoregula boonei (strain DSM 21154 / JCM 14090 / 6A8)</name>
    <dbReference type="NCBI Taxonomy" id="456442"/>
    <lineage>
        <taxon>Archaea</taxon>
        <taxon>Methanobacteriati</taxon>
        <taxon>Methanobacteriota</taxon>
        <taxon>Stenosarchaea group</taxon>
        <taxon>Methanomicrobia</taxon>
        <taxon>Methanomicrobiales</taxon>
        <taxon>Methanoregulaceae</taxon>
        <taxon>Methanoregula</taxon>
    </lineage>
</organism>
<dbReference type="EC" id="3.1.-.-" evidence="1"/>
<dbReference type="EMBL" id="CP000780">
    <property type="protein sequence ID" value="ABS55847.1"/>
    <property type="molecule type" value="Genomic_DNA"/>
</dbReference>
<dbReference type="RefSeq" id="WP_012106880.1">
    <property type="nucleotide sequence ID" value="NC_009712.1"/>
</dbReference>
<dbReference type="SMR" id="A7I7Y6"/>
<dbReference type="STRING" id="456442.Mboo_1329"/>
<dbReference type="GeneID" id="5411596"/>
<dbReference type="KEGG" id="mbn:Mboo_1329"/>
<dbReference type="eggNOG" id="arCOG01741">
    <property type="taxonomic scope" value="Archaea"/>
</dbReference>
<dbReference type="HOGENOM" id="CLU_023334_0_0_2"/>
<dbReference type="OrthoDB" id="31300at2157"/>
<dbReference type="Proteomes" id="UP000002408">
    <property type="component" value="Chromosome"/>
</dbReference>
<dbReference type="GO" id="GO:0005737">
    <property type="term" value="C:cytoplasm"/>
    <property type="evidence" value="ECO:0007669"/>
    <property type="project" value="UniProtKB-SubCell"/>
</dbReference>
<dbReference type="GO" id="GO:0004519">
    <property type="term" value="F:endonuclease activity"/>
    <property type="evidence" value="ECO:0007669"/>
    <property type="project" value="UniProtKB-UniRule"/>
</dbReference>
<dbReference type="GO" id="GO:0046872">
    <property type="term" value="F:metal ion binding"/>
    <property type="evidence" value="ECO:0007669"/>
    <property type="project" value="UniProtKB-UniRule"/>
</dbReference>
<dbReference type="GO" id="GO:0070651">
    <property type="term" value="P:nonfunctional rRNA decay"/>
    <property type="evidence" value="ECO:0007669"/>
    <property type="project" value="TreeGrafter"/>
</dbReference>
<dbReference type="GO" id="GO:0070966">
    <property type="term" value="P:nuclear-transcribed mRNA catabolic process, no-go decay"/>
    <property type="evidence" value="ECO:0007669"/>
    <property type="project" value="InterPro"/>
</dbReference>
<dbReference type="GO" id="GO:0070481">
    <property type="term" value="P:nuclear-transcribed mRNA catabolic process, non-stop decay"/>
    <property type="evidence" value="ECO:0007669"/>
    <property type="project" value="InterPro"/>
</dbReference>
<dbReference type="GO" id="GO:0032790">
    <property type="term" value="P:ribosome disassembly"/>
    <property type="evidence" value="ECO:0007669"/>
    <property type="project" value="TreeGrafter"/>
</dbReference>
<dbReference type="GO" id="GO:0071025">
    <property type="term" value="P:RNA surveillance"/>
    <property type="evidence" value="ECO:0007669"/>
    <property type="project" value="InterPro"/>
</dbReference>
<dbReference type="Gene3D" id="3.30.1330.30">
    <property type="match status" value="1"/>
</dbReference>
<dbReference type="Gene3D" id="3.30.420.60">
    <property type="entry name" value="eRF1 domain 2"/>
    <property type="match status" value="1"/>
</dbReference>
<dbReference type="Gene3D" id="2.30.30.870">
    <property type="entry name" value="Pelota, domain A"/>
    <property type="match status" value="1"/>
</dbReference>
<dbReference type="HAMAP" id="MF_01853">
    <property type="entry name" value="PelO"/>
    <property type="match status" value="1"/>
</dbReference>
<dbReference type="InterPro" id="IPR042226">
    <property type="entry name" value="eFR1_2_sf"/>
</dbReference>
<dbReference type="InterPro" id="IPR005140">
    <property type="entry name" value="eRF1_1_Pelota"/>
</dbReference>
<dbReference type="InterPro" id="IPR005142">
    <property type="entry name" value="eRF1_3"/>
</dbReference>
<dbReference type="InterPro" id="IPR038069">
    <property type="entry name" value="Pelota/DOM34_N"/>
</dbReference>
<dbReference type="InterPro" id="IPR023521">
    <property type="entry name" value="Pelota_arc"/>
</dbReference>
<dbReference type="InterPro" id="IPR029064">
    <property type="entry name" value="Ribosomal_eL30-like_sf"/>
</dbReference>
<dbReference type="InterPro" id="IPR004405">
    <property type="entry name" value="Transl-rel_pelota"/>
</dbReference>
<dbReference type="NCBIfam" id="TIGR00111">
    <property type="entry name" value="pelota"/>
    <property type="match status" value="1"/>
</dbReference>
<dbReference type="PANTHER" id="PTHR10853">
    <property type="entry name" value="PELOTA"/>
    <property type="match status" value="1"/>
</dbReference>
<dbReference type="PANTHER" id="PTHR10853:SF0">
    <property type="entry name" value="PROTEIN PELOTA HOMOLOG"/>
    <property type="match status" value="1"/>
</dbReference>
<dbReference type="Pfam" id="PF03463">
    <property type="entry name" value="eRF1_1"/>
    <property type="match status" value="1"/>
</dbReference>
<dbReference type="Pfam" id="PF03465">
    <property type="entry name" value="eRF1_3"/>
    <property type="match status" value="1"/>
</dbReference>
<dbReference type="SMART" id="SM01194">
    <property type="entry name" value="eRF1_1"/>
    <property type="match status" value="1"/>
</dbReference>
<dbReference type="SUPFAM" id="SSF159065">
    <property type="entry name" value="Dom34/Pelota N-terminal domain-like"/>
    <property type="match status" value="1"/>
</dbReference>
<dbReference type="SUPFAM" id="SSF55315">
    <property type="entry name" value="L30e-like"/>
    <property type="match status" value="1"/>
</dbReference>
<dbReference type="SUPFAM" id="SSF53137">
    <property type="entry name" value="Translational machinery components"/>
    <property type="match status" value="1"/>
</dbReference>
<protein>
    <recommendedName>
        <fullName evidence="1">Protein pelota homolog</fullName>
        <ecNumber evidence="1">3.1.-.-</ecNumber>
    </recommendedName>
</protein>
<feature type="chain" id="PRO_0000361803" description="Protein pelota homolog">
    <location>
        <begin position="1"/>
        <end position="341"/>
    </location>
</feature>
<sequence>MKAEYGEIKDNYGEIRLFPESIDDLWHLQHLVSPGDLVFATTFRSVEGATDKIRPEKVEKRPVRLGVRVEKVEFSHHGVRLRISGIIEHGMDTGAYHTINVETGYEISVIRRWRPVDLERLDRAVKASVYGVIHILTLEEGEAELFRLRQYGPESVITITAGSGKGGETETRTGFFDTVIKSIAEVSGPMVIAGPGFVKEDFVRYAKNKNCAPAGRAIVAETRRIGRGAVQDVIGAGTLEKLIGDLQLSREVRLMDEVLLRISRDGAIAYGYKDVATAIEYGAVDEVLLADSLLRDRAIVPLIESAERMQAKIIVLSTEFEPGERLAALGGIAALLRYKMG</sequence>
<gene>
    <name evidence="1" type="primary">pelA</name>
    <name type="ordered locus">Mboo_1329</name>
</gene>